<reference key="1">
    <citation type="journal article" date="1992" name="Biochem. J.">
        <title>Type II intermediate-filament proteins from wool. The amino acid sequence of component 5 and comparison with component 7c.</title>
        <authorList>
            <person name="Sparrow L.G."/>
            <person name="Robinson C.P."/>
            <person name="Caine J."/>
            <person name="McMahon D.T.W."/>
            <person name="Strike P.M."/>
        </authorList>
    </citation>
    <scope>PROTEIN SEQUENCE</scope>
    <source>
        <strain>Merino</strain>
        <tissue>Wool</tissue>
    </source>
</reference>
<name>K2M3_SHEEP</name>
<protein>
    <recommendedName>
        <fullName>Keratin, type II microfibrillar, component 5</fullName>
    </recommendedName>
</protein>
<evidence type="ECO:0000250" key="1">
    <source>
        <dbReference type="UniProtKB" id="P78386"/>
    </source>
</evidence>
<evidence type="ECO:0000255" key="2">
    <source>
        <dbReference type="PROSITE-ProRule" id="PRU01188"/>
    </source>
</evidence>
<feature type="chain" id="PRO_0000063749" description="Keratin, type II microfibrillar, component 5">
    <location>
        <begin position="1"/>
        <end position="502"/>
    </location>
</feature>
<feature type="domain" description="IF rod" evidence="2">
    <location>
        <begin position="122"/>
        <end position="433"/>
    </location>
</feature>
<feature type="region of interest" description="Head">
    <location>
        <begin position="1"/>
        <end position="122"/>
    </location>
</feature>
<feature type="region of interest" description="Coil 1A">
    <location>
        <begin position="123"/>
        <end position="157"/>
    </location>
</feature>
<feature type="region of interest" description="Linker 1">
    <location>
        <begin position="158"/>
        <end position="167"/>
    </location>
</feature>
<feature type="region of interest" description="Coil 1B">
    <location>
        <begin position="168"/>
        <end position="268"/>
    </location>
</feature>
<feature type="region of interest" description="Linker 12">
    <location>
        <begin position="269"/>
        <end position="285"/>
    </location>
</feature>
<feature type="region of interest" description="Coil 2">
    <location>
        <begin position="286"/>
        <end position="429"/>
    </location>
</feature>
<feature type="region of interest" description="Tail">
    <location>
        <begin position="430"/>
        <end position="502"/>
    </location>
</feature>
<feature type="modified residue" description="Blocked amino end (Ser)">
    <location>
        <position position="1"/>
    </location>
</feature>
<feature type="cross-link" description="Glycyl lysine isopeptide (Lys-Gly) (interchain with G-Cter in SUMO1)" evidence="1">
    <location>
        <position position="228"/>
    </location>
</feature>
<feature type="unsure residue" description="SC or CS">
    <location>
        <begin position="1"/>
        <end position="2"/>
    </location>
</feature>
<keyword id="KW-0175">Coiled coil</keyword>
<keyword id="KW-0903">Direct protein sequencing</keyword>
<keyword id="KW-0403">Intermediate filament</keyword>
<keyword id="KW-1017">Isopeptide bond</keyword>
<keyword id="KW-0416">Keratin</keyword>
<keyword id="KW-1185">Reference proteome</keyword>
<keyword id="KW-0832">Ubl conjugation</keyword>
<accession>P25691</accession>
<organism>
    <name type="scientific">Ovis aries</name>
    <name type="common">Sheep</name>
    <dbReference type="NCBI Taxonomy" id="9940"/>
    <lineage>
        <taxon>Eukaryota</taxon>
        <taxon>Metazoa</taxon>
        <taxon>Chordata</taxon>
        <taxon>Craniata</taxon>
        <taxon>Vertebrata</taxon>
        <taxon>Euteleostomi</taxon>
        <taxon>Mammalia</taxon>
        <taxon>Eutheria</taxon>
        <taxon>Laurasiatheria</taxon>
        <taxon>Artiodactyla</taxon>
        <taxon>Ruminantia</taxon>
        <taxon>Pecora</taxon>
        <taxon>Bovidae</taxon>
        <taxon>Caprinae</taxon>
        <taxon>Ovis</taxon>
    </lineage>
</organism>
<comment type="function">
    <text>Wool microfibrillar keratin.</text>
</comment>
<comment type="tissue specificity">
    <text>Hard keratin wool.</text>
</comment>
<comment type="miscellaneous">
    <text>There are two types of cytoskeletal and microfibrillar keratin: I (acidic; 40-55 kDa) and II (neutral to basic; 56-70 kDa).</text>
</comment>
<comment type="miscellaneous">
    <text>The low-sulfur proteins, derived from the microfibrillar fraction of wool extracts, are composed of two families, each consisting of 4 homologous subunits: the type I components (8C-1, 8C-2, 8A and 8B) and the type II components (5, 7A, 7B, and 7C).</text>
</comment>
<comment type="similarity">
    <text evidence="2">Belongs to the intermediate filament family.</text>
</comment>
<proteinExistence type="evidence at protein level"/>
<sequence>SCRSYRISPGYSVTRTFSSCSAVAPKTGSRCCISAAPYRGVSCYRGLTGFGSRSVSALGSCGPRIAVSGFRAGSCGRSFGYRSGGVGGLSPSCITTVSVNESLLTPLNLEIDPNAQCVKHQEKEQIKNLNSRFAAFIDKVRFLEQQNKLLETKWQFYQNQRCCESNLEPLFNGYIETLRREAEHVEADSGRLASELDHVQEVLEGYKKKYEEEVALRATAENEFVVLKKDVDCAYLRKSDLEANVEALVEESNFLKRLYDEEIQILNAHISDTSVIVKMDNSRDLNMDCVVAEIKAQYDDIASRSRAEAESWYRSKCEEMKATVIRHGETLRRTKEEINELNRVIQRLTAEIENAKCQRTKLEAAVAEAEQQGEAALNDARSKLAGLEEALQKAKQDMACLLKEYQEVMNSKLGLDIEIATYRRLLEGEEQRLCEGVGSVNVCVSSRGGVACGGLTYSSTAGRQIASGPVATGGSITVLAPDSCQPRASSFSCGSSRSVRFA</sequence>
<dbReference type="PIR" id="S29094">
    <property type="entry name" value="S29094"/>
</dbReference>
<dbReference type="SMR" id="P25691"/>
<dbReference type="PaxDb" id="9940-ENSOARP00000018352"/>
<dbReference type="eggNOG" id="ENOG502SK5S">
    <property type="taxonomic scope" value="Eukaryota"/>
</dbReference>
<dbReference type="Proteomes" id="UP000002356">
    <property type="component" value="Unplaced"/>
</dbReference>
<dbReference type="GO" id="GO:0005615">
    <property type="term" value="C:extracellular space"/>
    <property type="evidence" value="ECO:0007669"/>
    <property type="project" value="TreeGrafter"/>
</dbReference>
<dbReference type="GO" id="GO:0045095">
    <property type="term" value="C:keratin filament"/>
    <property type="evidence" value="ECO:0007669"/>
    <property type="project" value="InterPro"/>
</dbReference>
<dbReference type="GO" id="GO:0030280">
    <property type="term" value="F:structural constituent of skin epidermis"/>
    <property type="evidence" value="ECO:0007669"/>
    <property type="project" value="TreeGrafter"/>
</dbReference>
<dbReference type="GO" id="GO:0045109">
    <property type="term" value="P:intermediate filament organization"/>
    <property type="evidence" value="ECO:0007669"/>
    <property type="project" value="TreeGrafter"/>
</dbReference>
<dbReference type="GO" id="GO:0031424">
    <property type="term" value="P:keratinization"/>
    <property type="evidence" value="ECO:0007669"/>
    <property type="project" value="TreeGrafter"/>
</dbReference>
<dbReference type="FunFam" id="1.20.5.1160:FF:000001">
    <property type="entry name" value="Keratin type II"/>
    <property type="match status" value="1"/>
</dbReference>
<dbReference type="FunFam" id="1.20.5.170:FF:000004">
    <property type="entry name" value="Keratin, type II cytoskeletal 5"/>
    <property type="match status" value="1"/>
</dbReference>
<dbReference type="FunFam" id="1.20.5.500:FF:000001">
    <property type="entry name" value="Type II keratin 23"/>
    <property type="match status" value="1"/>
</dbReference>
<dbReference type="Gene3D" id="1.20.5.170">
    <property type="match status" value="1"/>
</dbReference>
<dbReference type="Gene3D" id="1.20.5.500">
    <property type="entry name" value="Single helix bin"/>
    <property type="match status" value="1"/>
</dbReference>
<dbReference type="Gene3D" id="1.20.5.1160">
    <property type="entry name" value="Vasodilator-stimulated phosphoprotein"/>
    <property type="match status" value="1"/>
</dbReference>
<dbReference type="InterPro" id="IPR018039">
    <property type="entry name" value="IF_conserved"/>
</dbReference>
<dbReference type="InterPro" id="IPR039008">
    <property type="entry name" value="IF_rod_dom"/>
</dbReference>
<dbReference type="InterPro" id="IPR032444">
    <property type="entry name" value="Keratin_2_head"/>
</dbReference>
<dbReference type="InterPro" id="IPR003054">
    <property type="entry name" value="Keratin_II"/>
</dbReference>
<dbReference type="PANTHER" id="PTHR45616">
    <property type="entry name" value="GATA-TYPE DOMAIN-CONTAINING PROTEIN"/>
    <property type="match status" value="1"/>
</dbReference>
<dbReference type="PANTHER" id="PTHR45616:SF43">
    <property type="entry name" value="KERATIN, TYPE II CUTICULAR HB5"/>
    <property type="match status" value="1"/>
</dbReference>
<dbReference type="Pfam" id="PF00038">
    <property type="entry name" value="Filament"/>
    <property type="match status" value="1"/>
</dbReference>
<dbReference type="Pfam" id="PF16208">
    <property type="entry name" value="Keratin_2_head"/>
    <property type="match status" value="1"/>
</dbReference>
<dbReference type="PRINTS" id="PR01276">
    <property type="entry name" value="TYPE2KERATIN"/>
</dbReference>
<dbReference type="SMART" id="SM01391">
    <property type="entry name" value="Filament"/>
    <property type="match status" value="1"/>
</dbReference>
<dbReference type="SUPFAM" id="SSF64593">
    <property type="entry name" value="Intermediate filament protein, coiled coil region"/>
    <property type="match status" value="2"/>
</dbReference>
<dbReference type="PROSITE" id="PS00226">
    <property type="entry name" value="IF_ROD_1"/>
    <property type="match status" value="1"/>
</dbReference>
<dbReference type="PROSITE" id="PS51842">
    <property type="entry name" value="IF_ROD_2"/>
    <property type="match status" value="1"/>
</dbReference>